<name>ROLC2_PANGI</name>
<evidence type="ECO:0000250" key="1"/>
<reference key="1">
    <citation type="journal article" date="2009" name="Prikl. Biokhim. Mikrobiol.">
        <title>Stability of the rolC gene and its expression in 15-year-old cell cultures of Panax ginseng.</title>
        <authorList>
            <person name="Kisilev K.V."/>
            <person name="Bulgakov V.P."/>
        </authorList>
    </citation>
    <scope>NUCLEOTIDE SEQUENCE [GENOMIC DNA]</scope>
</reference>
<proteinExistence type="inferred from homology"/>
<dbReference type="EC" id="3.2.1.-"/>
<dbReference type="EMBL" id="EU642407">
    <property type="protein sequence ID" value="ACD03673.1"/>
    <property type="molecule type" value="Genomic_DNA"/>
</dbReference>
<dbReference type="SMR" id="B2ZCQ1"/>
<dbReference type="GO" id="GO:0008422">
    <property type="term" value="F:beta-glucosidase activity"/>
    <property type="evidence" value="ECO:0007669"/>
    <property type="project" value="InterPro"/>
</dbReference>
<dbReference type="GO" id="GO:0005975">
    <property type="term" value="P:carbohydrate metabolic process"/>
    <property type="evidence" value="ECO:0007669"/>
    <property type="project" value="InterPro"/>
</dbReference>
<dbReference type="GO" id="GO:0009691">
    <property type="term" value="P:cytokinin biosynthetic process"/>
    <property type="evidence" value="ECO:0007669"/>
    <property type="project" value="UniProtKB-KW"/>
</dbReference>
<dbReference type="InterPro" id="IPR006065">
    <property type="entry name" value="Glyco_hydro_41"/>
</dbReference>
<dbReference type="PRINTS" id="PR00746">
    <property type="entry name" value="GLHYDRLASE41"/>
</dbReference>
<organism>
    <name type="scientific">Panax ginseng</name>
    <name type="common">Korean ginseng</name>
    <dbReference type="NCBI Taxonomy" id="4054"/>
    <lineage>
        <taxon>Eukaryota</taxon>
        <taxon>Viridiplantae</taxon>
        <taxon>Streptophyta</taxon>
        <taxon>Embryophyta</taxon>
        <taxon>Tracheophyta</taxon>
        <taxon>Spermatophyta</taxon>
        <taxon>Magnoliopsida</taxon>
        <taxon>eudicotyledons</taxon>
        <taxon>Gunneridae</taxon>
        <taxon>Pentapetalae</taxon>
        <taxon>asterids</taxon>
        <taxon>campanulids</taxon>
        <taxon>Apiales</taxon>
        <taxon>Araliaceae</taxon>
        <taxon>Panax</taxon>
    </lineage>
</organism>
<sequence>MAEDDLCSLFFKLKVEDVTSSDELARHMKNASNERKPLIEPGENQSMDIDEEGGSVGHGLLYLYVDCPTMMLCFYGGSLPYNWMQGALLTNLPPYQHDVTLDEVNRGLRQASGFFGYADPMRSAYFAAFSFPGRVIKLNEQMELTSTKGKCLTFDPYASTQLRFEPGELVRHGECKFAIG</sequence>
<comment type="function">
    <text evidence="1">Hydrolyzes cytokinin glucosides thus liberating free cytokinins.</text>
</comment>
<gene>
    <name type="primary">ROLC2</name>
</gene>
<keyword id="KW-0203">Cytokinin biosynthesis</keyword>
<keyword id="KW-0326">Glycosidase</keyword>
<keyword id="KW-0378">Hydrolase</keyword>
<feature type="chain" id="PRO_0000421066" description="Cytokinin-beta-glucosidase 2">
    <location>
        <begin position="1"/>
        <end position="180"/>
    </location>
</feature>
<protein>
    <recommendedName>
        <fullName>Cytokinin-beta-glucosidase 2</fullName>
        <ecNumber>3.2.1.-</ecNumber>
    </recommendedName>
    <alternativeName>
        <fullName>Protein ROL C 2</fullName>
        <shortName>rolC2-Pg</shortName>
    </alternativeName>
</protein>
<accession>B2ZCQ1</accession>